<comment type="function">
    <text evidence="1">Catalyzes the formation of 5-methyl-uridine at position 1939 (m5U1939) in 23S rRNA.</text>
</comment>
<comment type="catalytic activity">
    <reaction evidence="1">
        <text>uridine(1939) in 23S rRNA + S-adenosyl-L-methionine = 5-methyluridine(1939) in 23S rRNA + S-adenosyl-L-homocysteine + H(+)</text>
        <dbReference type="Rhea" id="RHEA:42908"/>
        <dbReference type="Rhea" id="RHEA-COMP:10278"/>
        <dbReference type="Rhea" id="RHEA-COMP:10279"/>
        <dbReference type="ChEBI" id="CHEBI:15378"/>
        <dbReference type="ChEBI" id="CHEBI:57856"/>
        <dbReference type="ChEBI" id="CHEBI:59789"/>
        <dbReference type="ChEBI" id="CHEBI:65315"/>
        <dbReference type="ChEBI" id="CHEBI:74447"/>
        <dbReference type="EC" id="2.1.1.190"/>
    </reaction>
</comment>
<comment type="similarity">
    <text evidence="1">Belongs to the class I-like SAM-binding methyltransferase superfamily. RNA M5U methyltransferase family. RlmD subfamily.</text>
</comment>
<keyword id="KW-0004">4Fe-4S</keyword>
<keyword id="KW-0408">Iron</keyword>
<keyword id="KW-0411">Iron-sulfur</keyword>
<keyword id="KW-0479">Metal-binding</keyword>
<keyword id="KW-0489">Methyltransferase</keyword>
<keyword id="KW-0698">rRNA processing</keyword>
<keyword id="KW-0949">S-adenosyl-L-methionine</keyword>
<keyword id="KW-0808">Transferase</keyword>
<protein>
    <recommendedName>
        <fullName evidence="1">23S rRNA (uracil(1939)-C(5))-methyltransferase RlmD</fullName>
        <ecNumber evidence="1">2.1.1.190</ecNumber>
    </recommendedName>
    <alternativeName>
        <fullName evidence="1">23S rRNA(m5U1939)-methyltransferase</fullName>
    </alternativeName>
</protein>
<reference key="1">
    <citation type="submission" date="2006-05" db="EMBL/GenBank/DDBJ databases">
        <title>Complete sequence of chromosome 3 of Burkholderia cenocepacia AU 1054.</title>
        <authorList>
            <consortium name="US DOE Joint Genome Institute"/>
            <person name="Copeland A."/>
            <person name="Lucas S."/>
            <person name="Lapidus A."/>
            <person name="Barry K."/>
            <person name="Detter J.C."/>
            <person name="Glavina del Rio T."/>
            <person name="Hammon N."/>
            <person name="Israni S."/>
            <person name="Dalin E."/>
            <person name="Tice H."/>
            <person name="Pitluck S."/>
            <person name="Chain P."/>
            <person name="Malfatti S."/>
            <person name="Shin M."/>
            <person name="Vergez L."/>
            <person name="Schmutz J."/>
            <person name="Larimer F."/>
            <person name="Land M."/>
            <person name="Hauser L."/>
            <person name="Kyrpides N."/>
            <person name="Lykidis A."/>
            <person name="LiPuma J.J."/>
            <person name="Konstantinidis K."/>
            <person name="Tiedje J.M."/>
            <person name="Richardson P."/>
        </authorList>
    </citation>
    <scope>NUCLEOTIDE SEQUENCE [LARGE SCALE GENOMIC DNA]</scope>
    <source>
        <strain>AU 1054</strain>
    </source>
</reference>
<feature type="chain" id="PRO_0000282031" description="23S rRNA (uracil(1939)-C(5))-methyltransferase RlmD">
    <location>
        <begin position="1"/>
        <end position="465"/>
    </location>
</feature>
<feature type="domain" description="TRAM" evidence="1">
    <location>
        <begin position="16"/>
        <end position="80"/>
    </location>
</feature>
<feature type="region of interest" description="Disordered" evidence="2">
    <location>
        <begin position="1"/>
        <end position="22"/>
    </location>
</feature>
<feature type="active site" description="Nucleophile" evidence="1">
    <location>
        <position position="421"/>
    </location>
</feature>
<feature type="binding site" evidence="1">
    <location>
        <position position="93"/>
    </location>
    <ligand>
        <name>[4Fe-4S] cluster</name>
        <dbReference type="ChEBI" id="CHEBI:49883"/>
    </ligand>
</feature>
<feature type="binding site" evidence="1">
    <location>
        <position position="99"/>
    </location>
    <ligand>
        <name>[4Fe-4S] cluster</name>
        <dbReference type="ChEBI" id="CHEBI:49883"/>
    </ligand>
</feature>
<feature type="binding site" evidence="1">
    <location>
        <position position="102"/>
    </location>
    <ligand>
        <name>[4Fe-4S] cluster</name>
        <dbReference type="ChEBI" id="CHEBI:49883"/>
    </ligand>
</feature>
<feature type="binding site" evidence="1">
    <location>
        <position position="181"/>
    </location>
    <ligand>
        <name>[4Fe-4S] cluster</name>
        <dbReference type="ChEBI" id="CHEBI:49883"/>
    </ligand>
</feature>
<feature type="binding site" evidence="1">
    <location>
        <position position="289"/>
    </location>
    <ligand>
        <name>S-adenosyl-L-methionine</name>
        <dbReference type="ChEBI" id="CHEBI:59789"/>
    </ligand>
</feature>
<feature type="binding site" evidence="1">
    <location>
        <position position="318"/>
    </location>
    <ligand>
        <name>S-adenosyl-L-methionine</name>
        <dbReference type="ChEBI" id="CHEBI:59789"/>
    </ligand>
</feature>
<feature type="binding site" evidence="1">
    <location>
        <position position="323"/>
    </location>
    <ligand>
        <name>S-adenosyl-L-methionine</name>
        <dbReference type="ChEBI" id="CHEBI:59789"/>
    </ligand>
</feature>
<feature type="binding site" evidence="1">
    <location>
        <position position="339"/>
    </location>
    <ligand>
        <name>S-adenosyl-L-methionine</name>
        <dbReference type="ChEBI" id="CHEBI:59789"/>
    </ligand>
</feature>
<feature type="binding site" evidence="1">
    <location>
        <position position="367"/>
    </location>
    <ligand>
        <name>S-adenosyl-L-methionine</name>
        <dbReference type="ChEBI" id="CHEBI:59789"/>
    </ligand>
</feature>
<feature type="binding site" evidence="1">
    <location>
        <position position="388"/>
    </location>
    <ligand>
        <name>S-adenosyl-L-methionine</name>
        <dbReference type="ChEBI" id="CHEBI:59789"/>
    </ligand>
</feature>
<organism>
    <name type="scientific">Burkholderia orbicola (strain AU 1054)</name>
    <dbReference type="NCBI Taxonomy" id="331271"/>
    <lineage>
        <taxon>Bacteria</taxon>
        <taxon>Pseudomonadati</taxon>
        <taxon>Pseudomonadota</taxon>
        <taxon>Betaproteobacteria</taxon>
        <taxon>Burkholderiales</taxon>
        <taxon>Burkholderiaceae</taxon>
        <taxon>Burkholderia</taxon>
        <taxon>Burkholderia cepacia complex</taxon>
        <taxon>Burkholderia orbicola</taxon>
    </lineage>
</organism>
<name>RLMD_BURO1</name>
<evidence type="ECO:0000255" key="1">
    <source>
        <dbReference type="HAMAP-Rule" id="MF_01010"/>
    </source>
</evidence>
<evidence type="ECO:0000256" key="2">
    <source>
        <dbReference type="SAM" id="MobiDB-lite"/>
    </source>
</evidence>
<gene>
    <name evidence="1" type="primary">rlmD</name>
    <name type="synonym">rumA</name>
    <name type="ordered locus">Bcen_6262</name>
</gene>
<sequence>MSEAVPTSARKSKNAPVAPGPAPVLEIESLDMEARGVGRTMTEDGEPGKVIFVEGALPGERVTYSSYRRKPSYEQATVVDILRPSVMRTQPKCTFFGTCGGCSMQHLDMRAQVAVKQRVLEDNLWHLAKLRAETMFAPIHGPSWGYRYRARLTVRNVAKKGGVLVGFHEKKSSYVADMTSCEVLPPHVSAMLVPLRRLVEGLSIRDRMPQIELAVGSTVTALVLRVLEPINADDEALLRAFADEHKVQFWLQPKGPDTVTPFYPLDVSLDYTLPEFGIRMPFKPTDFTQVNHQINRVLVGRALRLLAPSRDDRVLDLFCGIGNFTLPLARLSREVMGIEGSDTLTTRALANARENGVDGHTTFACRNLFEVTGDDLRALGAFDKFLIDPPREGALAVSKALAEIAQSGAGPLPKRIVYVSCNPSTLARDAGLLVHEAGYRLKGAGVVNMFPNTSHVESIALFERD</sequence>
<proteinExistence type="inferred from homology"/>
<dbReference type="EC" id="2.1.1.190" evidence="1"/>
<dbReference type="EMBL" id="CP000380">
    <property type="protein sequence ID" value="ABF81126.1"/>
    <property type="molecule type" value="Genomic_DNA"/>
</dbReference>
<dbReference type="SMR" id="Q1BGX9"/>
<dbReference type="HOGENOM" id="CLU_014689_8_2_4"/>
<dbReference type="GO" id="GO:0051539">
    <property type="term" value="F:4 iron, 4 sulfur cluster binding"/>
    <property type="evidence" value="ECO:0007669"/>
    <property type="project" value="UniProtKB-KW"/>
</dbReference>
<dbReference type="GO" id="GO:0005506">
    <property type="term" value="F:iron ion binding"/>
    <property type="evidence" value="ECO:0007669"/>
    <property type="project" value="UniProtKB-UniRule"/>
</dbReference>
<dbReference type="GO" id="GO:0003723">
    <property type="term" value="F:RNA binding"/>
    <property type="evidence" value="ECO:0007669"/>
    <property type="project" value="InterPro"/>
</dbReference>
<dbReference type="GO" id="GO:0070041">
    <property type="term" value="F:rRNA (uridine-C5-)-methyltransferase activity"/>
    <property type="evidence" value="ECO:0007669"/>
    <property type="project" value="UniProtKB-UniRule"/>
</dbReference>
<dbReference type="GO" id="GO:0070475">
    <property type="term" value="P:rRNA base methylation"/>
    <property type="evidence" value="ECO:0007669"/>
    <property type="project" value="TreeGrafter"/>
</dbReference>
<dbReference type="CDD" id="cd02440">
    <property type="entry name" value="AdoMet_MTases"/>
    <property type="match status" value="1"/>
</dbReference>
<dbReference type="Gene3D" id="2.40.50.1070">
    <property type="match status" value="1"/>
</dbReference>
<dbReference type="Gene3D" id="2.40.50.140">
    <property type="entry name" value="Nucleic acid-binding proteins"/>
    <property type="match status" value="1"/>
</dbReference>
<dbReference type="Gene3D" id="3.40.50.150">
    <property type="entry name" value="Vaccinia Virus protein VP39"/>
    <property type="match status" value="1"/>
</dbReference>
<dbReference type="HAMAP" id="MF_01010">
    <property type="entry name" value="23SrRNA_methyltr_RlmD"/>
    <property type="match status" value="1"/>
</dbReference>
<dbReference type="InterPro" id="IPR001566">
    <property type="entry name" value="23S_rRNA_MeTrfase_RlmD"/>
</dbReference>
<dbReference type="InterPro" id="IPR012340">
    <property type="entry name" value="NA-bd_OB-fold"/>
</dbReference>
<dbReference type="InterPro" id="IPR029063">
    <property type="entry name" value="SAM-dependent_MTases_sf"/>
</dbReference>
<dbReference type="InterPro" id="IPR002792">
    <property type="entry name" value="TRAM_dom"/>
</dbReference>
<dbReference type="InterPro" id="IPR010280">
    <property type="entry name" value="U5_MeTrfase_fam"/>
</dbReference>
<dbReference type="NCBIfam" id="NF009639">
    <property type="entry name" value="PRK13168.1"/>
    <property type="match status" value="1"/>
</dbReference>
<dbReference type="PANTHER" id="PTHR11061:SF49">
    <property type="entry name" value="23S RRNA (URACIL(1939)-C(5))-METHYLTRANSFERASE RLMD"/>
    <property type="match status" value="1"/>
</dbReference>
<dbReference type="PANTHER" id="PTHR11061">
    <property type="entry name" value="RNA M5U METHYLTRANSFERASE"/>
    <property type="match status" value="1"/>
</dbReference>
<dbReference type="Pfam" id="PF05958">
    <property type="entry name" value="tRNA_U5-meth_tr"/>
    <property type="match status" value="1"/>
</dbReference>
<dbReference type="SUPFAM" id="SSF50249">
    <property type="entry name" value="Nucleic acid-binding proteins"/>
    <property type="match status" value="1"/>
</dbReference>
<dbReference type="SUPFAM" id="SSF53335">
    <property type="entry name" value="S-adenosyl-L-methionine-dependent methyltransferases"/>
    <property type="match status" value="1"/>
</dbReference>
<dbReference type="PROSITE" id="PS51687">
    <property type="entry name" value="SAM_MT_RNA_M5U"/>
    <property type="match status" value="1"/>
</dbReference>
<dbReference type="PROSITE" id="PS50926">
    <property type="entry name" value="TRAM"/>
    <property type="match status" value="1"/>
</dbReference>
<accession>Q1BGX9</accession>